<name>RPOC1_LIRTU</name>
<feature type="chain" id="PRO_0000277171" description="DNA-directed RNA polymerase subunit beta'">
    <location>
        <begin position="1"/>
        <end position="681"/>
    </location>
</feature>
<feature type="binding site" evidence="1">
    <location>
        <position position="69"/>
    </location>
    <ligand>
        <name>Zn(2+)</name>
        <dbReference type="ChEBI" id="CHEBI:29105"/>
    </ligand>
</feature>
<feature type="binding site" evidence="1">
    <location>
        <position position="71"/>
    </location>
    <ligand>
        <name>Zn(2+)</name>
        <dbReference type="ChEBI" id="CHEBI:29105"/>
    </ligand>
</feature>
<feature type="binding site" evidence="1">
    <location>
        <position position="87"/>
    </location>
    <ligand>
        <name>Zn(2+)</name>
        <dbReference type="ChEBI" id="CHEBI:29105"/>
    </ligand>
</feature>
<feature type="binding site" evidence="1">
    <location>
        <position position="90"/>
    </location>
    <ligand>
        <name>Zn(2+)</name>
        <dbReference type="ChEBI" id="CHEBI:29105"/>
    </ligand>
</feature>
<feature type="binding site" evidence="1">
    <location>
        <position position="490"/>
    </location>
    <ligand>
        <name>Mg(2+)</name>
        <dbReference type="ChEBI" id="CHEBI:18420"/>
    </ligand>
</feature>
<feature type="binding site" evidence="1">
    <location>
        <position position="492"/>
    </location>
    <ligand>
        <name>Mg(2+)</name>
        <dbReference type="ChEBI" id="CHEBI:18420"/>
    </ligand>
</feature>
<feature type="binding site" evidence="1">
    <location>
        <position position="494"/>
    </location>
    <ligand>
        <name>Mg(2+)</name>
        <dbReference type="ChEBI" id="CHEBI:18420"/>
    </ligand>
</feature>
<comment type="function">
    <text evidence="1">DNA-dependent RNA polymerase catalyzes the transcription of DNA into RNA using the four ribonucleoside triphosphates as substrates.</text>
</comment>
<comment type="catalytic activity">
    <reaction evidence="1">
        <text>RNA(n) + a ribonucleoside 5'-triphosphate = RNA(n+1) + diphosphate</text>
        <dbReference type="Rhea" id="RHEA:21248"/>
        <dbReference type="Rhea" id="RHEA-COMP:14527"/>
        <dbReference type="Rhea" id="RHEA-COMP:17342"/>
        <dbReference type="ChEBI" id="CHEBI:33019"/>
        <dbReference type="ChEBI" id="CHEBI:61557"/>
        <dbReference type="ChEBI" id="CHEBI:140395"/>
        <dbReference type="EC" id="2.7.7.6"/>
    </reaction>
</comment>
<comment type="cofactor">
    <cofactor evidence="1">
        <name>Mg(2+)</name>
        <dbReference type="ChEBI" id="CHEBI:18420"/>
    </cofactor>
    <text evidence="1">Binds 1 Mg(2+) ion per subunit.</text>
</comment>
<comment type="cofactor">
    <cofactor evidence="1">
        <name>Zn(2+)</name>
        <dbReference type="ChEBI" id="CHEBI:29105"/>
    </cofactor>
    <text evidence="1">Binds 1 Zn(2+) ion per subunit.</text>
</comment>
<comment type="subunit">
    <text evidence="1">In plastids the minimal PEP RNA polymerase catalytic core is composed of four subunits: alpha, beta, beta', and beta''. When a (nuclear-encoded) sigma factor is associated with the core the holoenzyme is formed, which can initiate transcription.</text>
</comment>
<comment type="subcellular location">
    <subcellularLocation>
        <location evidence="1">Plastid</location>
        <location evidence="1">Chloroplast</location>
    </subcellularLocation>
</comment>
<comment type="similarity">
    <text evidence="1">Belongs to the RNA polymerase beta' chain family. RpoC1 subfamily.</text>
</comment>
<keyword id="KW-0150">Chloroplast</keyword>
<keyword id="KW-0240">DNA-directed RNA polymerase</keyword>
<keyword id="KW-0460">Magnesium</keyword>
<keyword id="KW-0479">Metal-binding</keyword>
<keyword id="KW-0548">Nucleotidyltransferase</keyword>
<keyword id="KW-0934">Plastid</keyword>
<keyword id="KW-0804">Transcription</keyword>
<keyword id="KW-0808">Transferase</keyword>
<keyword id="KW-0862">Zinc</keyword>
<gene>
    <name evidence="1" type="primary">rpoC1</name>
</gene>
<protein>
    <recommendedName>
        <fullName evidence="1">DNA-directed RNA polymerase subunit beta'</fullName>
        <ecNumber evidence="1">2.7.7.6</ecNumber>
    </recommendedName>
    <alternativeName>
        <fullName evidence="1">PEP</fullName>
    </alternativeName>
    <alternativeName>
        <fullName evidence="1">Plastid-encoded RNA polymerase subunit beta'</fullName>
        <shortName evidence="1">RNA polymerase subunit beta'</shortName>
    </alternativeName>
</protein>
<proteinExistence type="inferred from homology"/>
<evidence type="ECO:0000255" key="1">
    <source>
        <dbReference type="HAMAP-Rule" id="MF_01323"/>
    </source>
</evidence>
<sequence length="681" mass="78377">MIDRYKHQQLRIGSVSPQQISAWANKILPNGEIVGEVTKPYTFHYKTNKPEKDGLFCERIFGPIKSGICACGNYRVIGNEKEDPKFCEQCGVEFVDSRIRRYQMGYIKLACPVTHVWYLKRLPSYIASLLDKPLKELEGLVYCDFSFARPIAKKPTFLRLRGSFESEIQSRKYSIPLFFTTQDFDTFRNREISTGAGAIKEQLADPDLRIITDHSLVEWKELGEEGSADGNEWEDRKIGRRKDFLVRRMELAKHFIRTNVEPERMVLCLLPVLPPELRPIIQIDGGKPMSSDINELYRRVIYRNNTLTDPLTTSRSTPGESVMCQEKLVQEAVDTLLDNGIRGQPMRDGHNKVYKSFSDVIEGKEGRFRETLLGKRVDYSGRSVIVVGPSLSLHRCGLPREIAIELFQTFVIRGLIRQHVASNIGIAKSKIREKEPIVWEILQEVMQGHPVLLNRAPTLHRLGIQAFQPILVEGRAICLHPLVRKGFNADFDGDQMAVHVPLSLEAQAEARLLMFSHMNLLSPAIGDPISVPTQDMLIGLYILTIGNRRGICSNRYNPCNRRNYQNETVDYNKYTKEKEPYFCSSYDALGAYRQKRINLDSPLWLRWRLDQRVIASREVPIEVQYESLGTYHEIYGHYLIVRSVKKEILCIYIRTTVGHISFYREIEEAIQGFCRAYLYDT</sequence>
<geneLocation type="chloroplast"/>
<reference key="1">
    <citation type="journal article" date="2006" name="BMC Evol. Biol.">
        <title>Complete plastid genome sequences of Drimys, Liriodendron, and Piper: implications for the phylogenetic relationships of magnoliids.</title>
        <authorList>
            <person name="Cai Z."/>
            <person name="Penaflor C."/>
            <person name="Kuehl J.V."/>
            <person name="Leebens-Mack J."/>
            <person name="Carlson J.E."/>
            <person name="dePamphilis C.W."/>
            <person name="Boore J.L."/>
            <person name="Jansen R.K."/>
        </authorList>
    </citation>
    <scope>NUCLEOTIDE SEQUENCE [LARGE SCALE GENOMIC DNA]</scope>
</reference>
<organism>
    <name type="scientific">Liriodendron tulipifera</name>
    <name type="common">Tuliptree</name>
    <name type="synonym">Tulip poplar</name>
    <dbReference type="NCBI Taxonomy" id="3415"/>
    <lineage>
        <taxon>Eukaryota</taxon>
        <taxon>Viridiplantae</taxon>
        <taxon>Streptophyta</taxon>
        <taxon>Embryophyta</taxon>
        <taxon>Tracheophyta</taxon>
        <taxon>Spermatophyta</taxon>
        <taxon>Magnoliopsida</taxon>
        <taxon>Magnoliidae</taxon>
        <taxon>Magnoliales</taxon>
        <taxon>Magnoliaceae</taxon>
        <taxon>Liriodendron</taxon>
    </lineage>
</organism>
<accession>Q0G9M8</accession>
<dbReference type="EC" id="2.7.7.6" evidence="1"/>
<dbReference type="EMBL" id="DQ899947">
    <property type="protein sequence ID" value="ABI32500.1"/>
    <property type="molecule type" value="Genomic_DNA"/>
</dbReference>
<dbReference type="RefSeq" id="YP_740193.1">
    <property type="nucleotide sequence ID" value="NC_008326.1"/>
</dbReference>
<dbReference type="SMR" id="Q0G9M8"/>
<dbReference type="GeneID" id="4266601"/>
<dbReference type="GO" id="GO:0009507">
    <property type="term" value="C:chloroplast"/>
    <property type="evidence" value="ECO:0007669"/>
    <property type="project" value="UniProtKB-SubCell"/>
</dbReference>
<dbReference type="GO" id="GO:0000428">
    <property type="term" value="C:DNA-directed RNA polymerase complex"/>
    <property type="evidence" value="ECO:0007669"/>
    <property type="project" value="UniProtKB-KW"/>
</dbReference>
<dbReference type="GO" id="GO:0005739">
    <property type="term" value="C:mitochondrion"/>
    <property type="evidence" value="ECO:0007669"/>
    <property type="project" value="GOC"/>
</dbReference>
<dbReference type="GO" id="GO:0003677">
    <property type="term" value="F:DNA binding"/>
    <property type="evidence" value="ECO:0007669"/>
    <property type="project" value="UniProtKB-UniRule"/>
</dbReference>
<dbReference type="GO" id="GO:0003899">
    <property type="term" value="F:DNA-directed RNA polymerase activity"/>
    <property type="evidence" value="ECO:0007669"/>
    <property type="project" value="UniProtKB-UniRule"/>
</dbReference>
<dbReference type="GO" id="GO:0000287">
    <property type="term" value="F:magnesium ion binding"/>
    <property type="evidence" value="ECO:0007669"/>
    <property type="project" value="UniProtKB-UniRule"/>
</dbReference>
<dbReference type="GO" id="GO:0008270">
    <property type="term" value="F:zinc ion binding"/>
    <property type="evidence" value="ECO:0007669"/>
    <property type="project" value="UniProtKB-UniRule"/>
</dbReference>
<dbReference type="GO" id="GO:0006351">
    <property type="term" value="P:DNA-templated transcription"/>
    <property type="evidence" value="ECO:0007669"/>
    <property type="project" value="UniProtKB-UniRule"/>
</dbReference>
<dbReference type="FunFam" id="1.10.40.90:FF:000002">
    <property type="entry name" value="DNA-directed RNA polymerase subunit"/>
    <property type="match status" value="1"/>
</dbReference>
<dbReference type="FunFam" id="4.10.860.120:FF:000007">
    <property type="entry name" value="DNA-directed RNA polymerase subunit gamma"/>
    <property type="match status" value="1"/>
</dbReference>
<dbReference type="Gene3D" id="1.10.40.90">
    <property type="match status" value="1"/>
</dbReference>
<dbReference type="Gene3D" id="2.40.40.20">
    <property type="match status" value="1"/>
</dbReference>
<dbReference type="Gene3D" id="4.10.860.120">
    <property type="entry name" value="RNA polymerase II, clamp domain"/>
    <property type="match status" value="1"/>
</dbReference>
<dbReference type="Gene3D" id="1.10.274.100">
    <property type="entry name" value="RNA polymerase Rpb1, domain 3"/>
    <property type="match status" value="1"/>
</dbReference>
<dbReference type="HAMAP" id="MF_01323">
    <property type="entry name" value="RNApol_bact_RpoC1"/>
    <property type="match status" value="1"/>
</dbReference>
<dbReference type="InterPro" id="IPR045867">
    <property type="entry name" value="DNA-dir_RpoC_beta_prime"/>
</dbReference>
<dbReference type="InterPro" id="IPR000722">
    <property type="entry name" value="RNA_pol_asu"/>
</dbReference>
<dbReference type="InterPro" id="IPR006592">
    <property type="entry name" value="RNA_pol_N"/>
</dbReference>
<dbReference type="InterPro" id="IPR007080">
    <property type="entry name" value="RNA_pol_Rpb1_1"/>
</dbReference>
<dbReference type="InterPro" id="IPR042102">
    <property type="entry name" value="RNA_pol_Rpb1_3_sf"/>
</dbReference>
<dbReference type="InterPro" id="IPR044893">
    <property type="entry name" value="RNA_pol_Rpb1_clamp_domain"/>
</dbReference>
<dbReference type="InterPro" id="IPR034678">
    <property type="entry name" value="RNApol_RpoC1"/>
</dbReference>
<dbReference type="PANTHER" id="PTHR19376">
    <property type="entry name" value="DNA-DIRECTED RNA POLYMERASE"/>
    <property type="match status" value="1"/>
</dbReference>
<dbReference type="PANTHER" id="PTHR19376:SF54">
    <property type="entry name" value="DNA-DIRECTED RNA POLYMERASE SUBUNIT BETA"/>
    <property type="match status" value="1"/>
</dbReference>
<dbReference type="Pfam" id="PF04997">
    <property type="entry name" value="RNA_pol_Rpb1_1"/>
    <property type="match status" value="1"/>
</dbReference>
<dbReference type="Pfam" id="PF00623">
    <property type="entry name" value="RNA_pol_Rpb1_2"/>
    <property type="match status" value="2"/>
</dbReference>
<dbReference type="SMART" id="SM00663">
    <property type="entry name" value="RPOLA_N"/>
    <property type="match status" value="1"/>
</dbReference>
<dbReference type="SUPFAM" id="SSF64484">
    <property type="entry name" value="beta and beta-prime subunits of DNA dependent RNA-polymerase"/>
    <property type="match status" value="1"/>
</dbReference>